<gene>
    <name type="primary">marveld2</name>
    <name type="synonym">mrvldc2</name>
    <name type="ORF">TGas093b21.1</name>
</gene>
<feature type="chain" id="PRO_0000271528" description="MARVEL domain-containing protein 2">
    <location>
        <begin position="1"/>
        <end position="568"/>
    </location>
</feature>
<feature type="topological domain" description="Cytoplasmic" evidence="2">
    <location>
        <begin position="1"/>
        <end position="211"/>
    </location>
</feature>
<feature type="transmembrane region" description="Helical" evidence="2">
    <location>
        <begin position="212"/>
        <end position="232"/>
    </location>
</feature>
<feature type="topological domain" description="Extracellular" evidence="2">
    <location>
        <begin position="233"/>
        <end position="266"/>
    </location>
</feature>
<feature type="transmembrane region" description="Helical" evidence="2">
    <location>
        <begin position="267"/>
        <end position="287"/>
    </location>
</feature>
<feature type="topological domain" description="Cytoplasmic" evidence="2">
    <location>
        <begin position="288"/>
        <end position="303"/>
    </location>
</feature>
<feature type="transmembrane region" description="Helical" evidence="2">
    <location>
        <begin position="304"/>
        <end position="324"/>
    </location>
</feature>
<feature type="topological domain" description="Extracellular" evidence="2">
    <location>
        <begin position="325"/>
        <end position="354"/>
    </location>
</feature>
<feature type="transmembrane region" description="Helical" evidence="2">
    <location>
        <begin position="355"/>
        <end position="375"/>
    </location>
</feature>
<feature type="topological domain" description="Cytoplasmic" evidence="2">
    <location>
        <begin position="376"/>
        <end position="568"/>
    </location>
</feature>
<feature type="domain" description="MARVEL" evidence="3">
    <location>
        <begin position="205"/>
        <end position="379"/>
    </location>
</feature>
<feature type="domain" description="OCEL" evidence="4">
    <location>
        <begin position="451"/>
        <end position="562"/>
    </location>
</feature>
<feature type="region of interest" description="Disordered" evidence="5">
    <location>
        <begin position="1"/>
        <end position="72"/>
    </location>
</feature>
<feature type="region of interest" description="Disordered" evidence="5">
    <location>
        <begin position="116"/>
        <end position="163"/>
    </location>
</feature>
<feature type="coiled-coil region" evidence="2">
    <location>
        <begin position="462"/>
        <end position="559"/>
    </location>
</feature>
<feature type="compositionally biased region" description="Basic and acidic residues" evidence="5">
    <location>
        <begin position="29"/>
        <end position="46"/>
    </location>
</feature>
<feature type="compositionally biased region" description="Pro residues" evidence="5">
    <location>
        <begin position="52"/>
        <end position="62"/>
    </location>
</feature>
<feature type="sequence conflict" description="In Ref. 1; CAJ83822." evidence="6" ref="1">
    <original>G</original>
    <variation>E</variation>
    <location>
        <position position="136"/>
    </location>
</feature>
<comment type="function">
    <text evidence="1">May play a role in the formation of the epithelial barrier.</text>
</comment>
<comment type="subcellular location">
    <subcellularLocation>
        <location evidence="1">Cell membrane</location>
        <topology evidence="1">Multi-pass membrane protein</topology>
    </subcellularLocation>
    <subcellularLocation>
        <location evidence="1">Cell junction</location>
        <location evidence="1">Tight junction</location>
    </subcellularLocation>
    <text evidence="1">Found at tricellular contacts.</text>
</comment>
<comment type="similarity">
    <text evidence="4">Belongs to the ELL/occludin family.</text>
</comment>
<protein>
    <recommendedName>
        <fullName>MARVEL domain-containing protein 2</fullName>
    </recommendedName>
</protein>
<sequence length="568" mass="64880">MSGGGSSSGPRSKDRNLNGRSAQYDEVPADPRHPETNLETLHDRDLALSADPLPPPPLPLHPPFGAEFYPSDSEEPVTTLELRPVRRFIPDSWKNIFKGKKENPWENPMTEINYTSGGVPCSPPRSPSLPASEPHGKNLAGDSKTVASSYRDPYGGSGGSYNSRREEEAMLPHDPYGSLGRQTQTVKTYSERVEEYNMRYAYMKSWAGLLRILCIVELLLGAAVFACVTAYIHKDNEWYNMFGYSQPYGYTASMQGGYYYSGPKTPFVLVVAGLAWIVTIILLVLGMSMYYRTILLDSTWWPLTEFGINISLFILYMAGAIVYVNDTNRGGLCYYQLFNTPVNASFCRVEGGQTAAIIFLFVSMLMYFISAMVSLKLWRHESARKRREFLGQEMNPNQISPPKVMREVALGNGHMIDVPDQQRDMRKVEMKPELLSGYIPAGHIPKPIVMPDYVAKYQAIKAEDERERYKAVFNDQFAEYKELHAEVQAVMKKFSELDAVMQKLPRNPENQHEYERIAKVLQEYQKKKNEPTFLEKKERCEYLKNKLSHIKQRIQEYDKVMDWNDGYN</sequence>
<accession>Q0IHQ3</accession>
<accession>Q28D82</accession>
<proteinExistence type="evidence at transcript level"/>
<organism>
    <name type="scientific">Xenopus tropicalis</name>
    <name type="common">Western clawed frog</name>
    <name type="synonym">Silurana tropicalis</name>
    <dbReference type="NCBI Taxonomy" id="8364"/>
    <lineage>
        <taxon>Eukaryota</taxon>
        <taxon>Metazoa</taxon>
        <taxon>Chordata</taxon>
        <taxon>Craniata</taxon>
        <taxon>Vertebrata</taxon>
        <taxon>Euteleostomi</taxon>
        <taxon>Amphibia</taxon>
        <taxon>Batrachia</taxon>
        <taxon>Anura</taxon>
        <taxon>Pipoidea</taxon>
        <taxon>Pipidae</taxon>
        <taxon>Xenopodinae</taxon>
        <taxon>Xenopus</taxon>
        <taxon>Silurana</taxon>
    </lineage>
</organism>
<name>MALD2_XENTR</name>
<evidence type="ECO:0000250" key="1">
    <source>
        <dbReference type="UniProtKB" id="Q3UZP0"/>
    </source>
</evidence>
<evidence type="ECO:0000255" key="2"/>
<evidence type="ECO:0000255" key="3">
    <source>
        <dbReference type="PROSITE-ProRule" id="PRU00581"/>
    </source>
</evidence>
<evidence type="ECO:0000255" key="4">
    <source>
        <dbReference type="PROSITE-ProRule" id="PRU01324"/>
    </source>
</evidence>
<evidence type="ECO:0000256" key="5">
    <source>
        <dbReference type="SAM" id="MobiDB-lite"/>
    </source>
</evidence>
<evidence type="ECO:0000305" key="6"/>
<reference key="1">
    <citation type="submission" date="2006-10" db="EMBL/GenBank/DDBJ databases">
        <authorList>
            <consortium name="Sanger Xenopus tropicalis EST/cDNA project"/>
        </authorList>
    </citation>
    <scope>NUCLEOTIDE SEQUENCE [LARGE SCALE MRNA]</scope>
    <source>
        <tissue>Gastrula</tissue>
    </source>
</reference>
<reference key="2">
    <citation type="submission" date="2006-09" db="EMBL/GenBank/DDBJ databases">
        <authorList>
            <consortium name="NIH - Xenopus Gene Collection (XGC) project"/>
        </authorList>
    </citation>
    <scope>NUCLEOTIDE SEQUENCE [LARGE SCALE MRNA]</scope>
    <source>
        <strain>N6</strain>
        <tissue>Skin</tissue>
    </source>
</reference>
<keyword id="KW-0965">Cell junction</keyword>
<keyword id="KW-1003">Cell membrane</keyword>
<keyword id="KW-0175">Coiled coil</keyword>
<keyword id="KW-0472">Membrane</keyword>
<keyword id="KW-1185">Reference proteome</keyword>
<keyword id="KW-0796">Tight junction</keyword>
<keyword id="KW-0812">Transmembrane</keyword>
<keyword id="KW-1133">Transmembrane helix</keyword>
<dbReference type="EMBL" id="CR855651">
    <property type="protein sequence ID" value="CAJ83822.1"/>
    <property type="molecule type" value="mRNA"/>
</dbReference>
<dbReference type="EMBL" id="BC123026">
    <property type="protein sequence ID" value="AAI23027.1"/>
    <property type="molecule type" value="mRNA"/>
</dbReference>
<dbReference type="RefSeq" id="NP_001017292.1">
    <property type="nucleotide sequence ID" value="NM_001017292.2"/>
</dbReference>
<dbReference type="SMR" id="Q0IHQ3"/>
<dbReference type="FunCoup" id="Q0IHQ3">
    <property type="interactions" value="364"/>
</dbReference>
<dbReference type="STRING" id="8364.ENSXETP00000043692"/>
<dbReference type="PaxDb" id="8364-ENSXETP00000039416"/>
<dbReference type="DNASU" id="550046"/>
<dbReference type="GeneID" id="550046"/>
<dbReference type="KEGG" id="xtr:550046"/>
<dbReference type="AGR" id="Xenbase:XB-GENE-5839559"/>
<dbReference type="CTD" id="153562"/>
<dbReference type="Xenbase" id="XB-GENE-5839559">
    <property type="gene designation" value="marveld2"/>
</dbReference>
<dbReference type="eggNOG" id="KOG4796">
    <property type="taxonomic scope" value="Eukaryota"/>
</dbReference>
<dbReference type="InParanoid" id="Q0IHQ3"/>
<dbReference type="OrthoDB" id="6284217at2759"/>
<dbReference type="Proteomes" id="UP000008143">
    <property type="component" value="Chromosome 1"/>
</dbReference>
<dbReference type="GO" id="GO:0005923">
    <property type="term" value="C:bicellular tight junction"/>
    <property type="evidence" value="ECO:0007669"/>
    <property type="project" value="UniProtKB-SubCell"/>
</dbReference>
<dbReference type="GO" id="GO:0005886">
    <property type="term" value="C:plasma membrane"/>
    <property type="evidence" value="ECO:0007669"/>
    <property type="project" value="UniProtKB-SubCell"/>
</dbReference>
<dbReference type="GO" id="GO:0070160">
    <property type="term" value="C:tight junction"/>
    <property type="evidence" value="ECO:0000250"/>
    <property type="project" value="UniProtKB"/>
</dbReference>
<dbReference type="Gene3D" id="6.10.140.340">
    <property type="match status" value="1"/>
</dbReference>
<dbReference type="InterPro" id="IPR031176">
    <property type="entry name" value="ELL/occludin"/>
</dbReference>
<dbReference type="InterPro" id="IPR008253">
    <property type="entry name" value="Marvel"/>
</dbReference>
<dbReference type="InterPro" id="IPR010844">
    <property type="entry name" value="Occludin_ELL"/>
</dbReference>
<dbReference type="PANTHER" id="PTHR23288:SF3">
    <property type="entry name" value="MARVEL DOMAIN-CONTAINING PROTEIN 2"/>
    <property type="match status" value="1"/>
</dbReference>
<dbReference type="PANTHER" id="PTHR23288">
    <property type="entry name" value="OCCLUDIN AND RNA POLYMERASE II ELONGATION FACTOR ELL"/>
    <property type="match status" value="1"/>
</dbReference>
<dbReference type="Pfam" id="PF01284">
    <property type="entry name" value="MARVEL"/>
    <property type="match status" value="1"/>
</dbReference>
<dbReference type="Pfam" id="PF07303">
    <property type="entry name" value="Occludin_ELL"/>
    <property type="match status" value="1"/>
</dbReference>
<dbReference type="SUPFAM" id="SSF144292">
    <property type="entry name" value="occludin/ELL-like"/>
    <property type="match status" value="1"/>
</dbReference>
<dbReference type="PROSITE" id="PS51225">
    <property type="entry name" value="MARVEL"/>
    <property type="match status" value="1"/>
</dbReference>
<dbReference type="PROSITE" id="PS51980">
    <property type="entry name" value="OCEL"/>
    <property type="match status" value="1"/>
</dbReference>